<accession>B4UBC5</accession>
<protein>
    <recommendedName>
        <fullName evidence="1">Small ribosomal subunit protein uS4</fullName>
    </recommendedName>
    <alternativeName>
        <fullName evidence="2">30S ribosomal protein S4</fullName>
    </alternativeName>
</protein>
<gene>
    <name evidence="1" type="primary">rpsD</name>
    <name type="ordered locus">AnaeK_1959</name>
</gene>
<name>RS4_ANASK</name>
<comment type="function">
    <text evidence="1">One of the primary rRNA binding proteins, it binds directly to 16S rRNA where it nucleates assembly of the body of the 30S subunit.</text>
</comment>
<comment type="function">
    <text evidence="1">With S5 and S12 plays an important role in translational accuracy.</text>
</comment>
<comment type="subunit">
    <text evidence="1">Part of the 30S ribosomal subunit. Contacts protein S5. The interaction surface between S4 and S5 is involved in control of translational fidelity.</text>
</comment>
<comment type="similarity">
    <text evidence="1">Belongs to the universal ribosomal protein uS4 family.</text>
</comment>
<dbReference type="EMBL" id="CP001131">
    <property type="protein sequence ID" value="ACG73187.1"/>
    <property type="molecule type" value="Genomic_DNA"/>
</dbReference>
<dbReference type="RefSeq" id="WP_011420974.1">
    <property type="nucleotide sequence ID" value="NC_011145.1"/>
</dbReference>
<dbReference type="SMR" id="B4UBC5"/>
<dbReference type="KEGG" id="ank:AnaeK_1959"/>
<dbReference type="HOGENOM" id="CLU_092403_0_2_7"/>
<dbReference type="OrthoDB" id="9803672at2"/>
<dbReference type="Proteomes" id="UP000001871">
    <property type="component" value="Chromosome"/>
</dbReference>
<dbReference type="GO" id="GO:0015935">
    <property type="term" value="C:small ribosomal subunit"/>
    <property type="evidence" value="ECO:0007669"/>
    <property type="project" value="InterPro"/>
</dbReference>
<dbReference type="GO" id="GO:0019843">
    <property type="term" value="F:rRNA binding"/>
    <property type="evidence" value="ECO:0007669"/>
    <property type="project" value="UniProtKB-UniRule"/>
</dbReference>
<dbReference type="GO" id="GO:0003735">
    <property type="term" value="F:structural constituent of ribosome"/>
    <property type="evidence" value="ECO:0007669"/>
    <property type="project" value="InterPro"/>
</dbReference>
<dbReference type="GO" id="GO:0042274">
    <property type="term" value="P:ribosomal small subunit biogenesis"/>
    <property type="evidence" value="ECO:0007669"/>
    <property type="project" value="TreeGrafter"/>
</dbReference>
<dbReference type="GO" id="GO:0006412">
    <property type="term" value="P:translation"/>
    <property type="evidence" value="ECO:0007669"/>
    <property type="project" value="UniProtKB-UniRule"/>
</dbReference>
<dbReference type="CDD" id="cd00165">
    <property type="entry name" value="S4"/>
    <property type="match status" value="1"/>
</dbReference>
<dbReference type="FunFam" id="1.10.1050.10:FF:000001">
    <property type="entry name" value="30S ribosomal protein S4"/>
    <property type="match status" value="1"/>
</dbReference>
<dbReference type="FunFam" id="3.10.290.10:FF:000001">
    <property type="entry name" value="30S ribosomal protein S4"/>
    <property type="match status" value="1"/>
</dbReference>
<dbReference type="Gene3D" id="1.10.1050.10">
    <property type="entry name" value="Ribosomal Protein S4 Delta 41, Chain A, domain 1"/>
    <property type="match status" value="1"/>
</dbReference>
<dbReference type="Gene3D" id="3.10.290.10">
    <property type="entry name" value="RNA-binding S4 domain"/>
    <property type="match status" value="1"/>
</dbReference>
<dbReference type="HAMAP" id="MF_01306_B">
    <property type="entry name" value="Ribosomal_uS4_B"/>
    <property type="match status" value="1"/>
</dbReference>
<dbReference type="InterPro" id="IPR022801">
    <property type="entry name" value="Ribosomal_uS4"/>
</dbReference>
<dbReference type="InterPro" id="IPR005709">
    <property type="entry name" value="Ribosomal_uS4_bac-type"/>
</dbReference>
<dbReference type="InterPro" id="IPR018079">
    <property type="entry name" value="Ribosomal_uS4_CS"/>
</dbReference>
<dbReference type="InterPro" id="IPR001912">
    <property type="entry name" value="Ribosomal_uS4_N"/>
</dbReference>
<dbReference type="InterPro" id="IPR002942">
    <property type="entry name" value="S4_RNA-bd"/>
</dbReference>
<dbReference type="InterPro" id="IPR036986">
    <property type="entry name" value="S4_RNA-bd_sf"/>
</dbReference>
<dbReference type="NCBIfam" id="NF003717">
    <property type="entry name" value="PRK05327.1"/>
    <property type="match status" value="1"/>
</dbReference>
<dbReference type="NCBIfam" id="TIGR01017">
    <property type="entry name" value="rpsD_bact"/>
    <property type="match status" value="1"/>
</dbReference>
<dbReference type="PANTHER" id="PTHR11831">
    <property type="entry name" value="30S 40S RIBOSOMAL PROTEIN"/>
    <property type="match status" value="1"/>
</dbReference>
<dbReference type="PANTHER" id="PTHR11831:SF4">
    <property type="entry name" value="SMALL RIBOSOMAL SUBUNIT PROTEIN US4M"/>
    <property type="match status" value="1"/>
</dbReference>
<dbReference type="Pfam" id="PF00163">
    <property type="entry name" value="Ribosomal_S4"/>
    <property type="match status" value="1"/>
</dbReference>
<dbReference type="Pfam" id="PF01479">
    <property type="entry name" value="S4"/>
    <property type="match status" value="1"/>
</dbReference>
<dbReference type="SMART" id="SM01390">
    <property type="entry name" value="Ribosomal_S4"/>
    <property type="match status" value="1"/>
</dbReference>
<dbReference type="SMART" id="SM00363">
    <property type="entry name" value="S4"/>
    <property type="match status" value="1"/>
</dbReference>
<dbReference type="SUPFAM" id="SSF55174">
    <property type="entry name" value="Alpha-L RNA-binding motif"/>
    <property type="match status" value="1"/>
</dbReference>
<dbReference type="PROSITE" id="PS00632">
    <property type="entry name" value="RIBOSOMAL_S4"/>
    <property type="match status" value="1"/>
</dbReference>
<dbReference type="PROSITE" id="PS50889">
    <property type="entry name" value="S4"/>
    <property type="match status" value="1"/>
</dbReference>
<evidence type="ECO:0000255" key="1">
    <source>
        <dbReference type="HAMAP-Rule" id="MF_01306"/>
    </source>
</evidence>
<evidence type="ECO:0000305" key="2"/>
<feature type="chain" id="PRO_1000140681" description="Small ribosomal subunit protein uS4">
    <location>
        <begin position="1"/>
        <end position="208"/>
    </location>
</feature>
<feature type="domain" description="S4 RNA-binding" evidence="1">
    <location>
        <begin position="98"/>
        <end position="159"/>
    </location>
</feature>
<keyword id="KW-0687">Ribonucleoprotein</keyword>
<keyword id="KW-0689">Ribosomal protein</keyword>
<keyword id="KW-0694">RNA-binding</keyword>
<keyword id="KW-0699">rRNA-binding</keyword>
<organism>
    <name type="scientific">Anaeromyxobacter sp. (strain K)</name>
    <dbReference type="NCBI Taxonomy" id="447217"/>
    <lineage>
        <taxon>Bacteria</taxon>
        <taxon>Pseudomonadati</taxon>
        <taxon>Myxococcota</taxon>
        <taxon>Myxococcia</taxon>
        <taxon>Myxococcales</taxon>
        <taxon>Cystobacterineae</taxon>
        <taxon>Anaeromyxobacteraceae</taxon>
        <taxon>Anaeromyxobacter</taxon>
    </lineage>
</organism>
<reference key="1">
    <citation type="submission" date="2008-08" db="EMBL/GenBank/DDBJ databases">
        <title>Complete sequence of Anaeromyxobacter sp. K.</title>
        <authorList>
            <consortium name="US DOE Joint Genome Institute"/>
            <person name="Lucas S."/>
            <person name="Copeland A."/>
            <person name="Lapidus A."/>
            <person name="Glavina del Rio T."/>
            <person name="Dalin E."/>
            <person name="Tice H."/>
            <person name="Bruce D."/>
            <person name="Goodwin L."/>
            <person name="Pitluck S."/>
            <person name="Saunders E."/>
            <person name="Brettin T."/>
            <person name="Detter J.C."/>
            <person name="Han C."/>
            <person name="Larimer F."/>
            <person name="Land M."/>
            <person name="Hauser L."/>
            <person name="Kyrpides N."/>
            <person name="Ovchinnikiva G."/>
            <person name="Beliaev A."/>
        </authorList>
    </citation>
    <scope>NUCLEOTIDE SEQUENCE [LARGE SCALE GENOMIC DNA]</scope>
    <source>
        <strain>K</strain>
    </source>
</reference>
<sequence>MARYSESVCRLCRRENLKMYLKGDRCYTDKCAIERRPYPPGQHGQGRTKFSEYGVQLREKQKVKRMYGLLEAGFRHAYQNAAAAKGKTGENLLQTLELRLDNVVFRLGFADTRNEARQLVRHGHFKVNGRKVNIPSYLCRPGDKVELKDRSKKVVRITEALEAVDRRGVPAWLDLDKGGFKGTVKTSPAREDITMPIQEQLIVELYSK</sequence>
<proteinExistence type="inferred from homology"/>